<evidence type="ECO:0000255" key="1">
    <source>
        <dbReference type="HAMAP-Rule" id="MF_00418"/>
    </source>
</evidence>
<evidence type="ECO:0000305" key="2"/>
<proteinExistence type="inferred from homology"/>
<accession>A7HX36</accession>
<sequence>MFKGSYVALITPFKNGAVDEAAFVKLVEWQIEQGTHGLVPCGTTGESPTLSHDEHKRVVELCVKTAKGRVPVIAGAGSNNTVEAIELTRFAKKVGADAVLSVTGYYNKPSQEGIFAHFKAVNDAVDIPIILYNIPGRTIVDITLETMTRLFELKNVVGVKDATANLARVSLQRQEMGAEFCQLSGEDATALGFNAHGGVGCISVTANVAPALCSAFQEATLDGDYRKALEIQDRLMPLHNALFVDPNPAPVKYAANLLGLCANELRLPLVPASAAAEQKVLGAMRSAGLLN</sequence>
<protein>
    <recommendedName>
        <fullName evidence="1">4-hydroxy-tetrahydrodipicolinate synthase</fullName>
        <shortName evidence="1">HTPA synthase</shortName>
        <ecNumber evidence="1">4.3.3.7</ecNumber>
    </recommendedName>
</protein>
<feature type="chain" id="PRO_1000072293" description="4-hydroxy-tetrahydrodipicolinate synthase">
    <location>
        <begin position="1"/>
        <end position="291"/>
    </location>
</feature>
<feature type="active site" description="Proton donor/acceptor" evidence="1">
    <location>
        <position position="132"/>
    </location>
</feature>
<feature type="active site" description="Schiff-base intermediate with substrate" evidence="1">
    <location>
        <position position="160"/>
    </location>
</feature>
<feature type="binding site" evidence="1">
    <location>
        <position position="44"/>
    </location>
    <ligand>
        <name>pyruvate</name>
        <dbReference type="ChEBI" id="CHEBI:15361"/>
    </ligand>
</feature>
<feature type="binding site" evidence="1">
    <location>
        <position position="202"/>
    </location>
    <ligand>
        <name>pyruvate</name>
        <dbReference type="ChEBI" id="CHEBI:15361"/>
    </ligand>
</feature>
<feature type="site" description="Part of a proton relay during catalysis" evidence="1">
    <location>
        <position position="43"/>
    </location>
</feature>
<feature type="site" description="Part of a proton relay during catalysis" evidence="1">
    <location>
        <position position="106"/>
    </location>
</feature>
<gene>
    <name evidence="1" type="primary">dapA</name>
    <name type="ordered locus">Plav_2862</name>
</gene>
<reference key="1">
    <citation type="journal article" date="2011" name="Stand. Genomic Sci.">
        <title>Complete genome sequence of Parvibaculum lavamentivorans type strain (DS-1(T)).</title>
        <authorList>
            <person name="Schleheck D."/>
            <person name="Weiss M."/>
            <person name="Pitluck S."/>
            <person name="Bruce D."/>
            <person name="Land M.L."/>
            <person name="Han S."/>
            <person name="Saunders E."/>
            <person name="Tapia R."/>
            <person name="Detter C."/>
            <person name="Brettin T."/>
            <person name="Han J."/>
            <person name="Woyke T."/>
            <person name="Goodwin L."/>
            <person name="Pennacchio L."/>
            <person name="Nolan M."/>
            <person name="Cook A.M."/>
            <person name="Kjelleberg S."/>
            <person name="Thomas T."/>
        </authorList>
    </citation>
    <scope>NUCLEOTIDE SEQUENCE [LARGE SCALE GENOMIC DNA]</scope>
    <source>
        <strain>DS-1 / DSM 13023 / NCIMB 13966</strain>
    </source>
</reference>
<keyword id="KW-0028">Amino-acid biosynthesis</keyword>
<keyword id="KW-0963">Cytoplasm</keyword>
<keyword id="KW-0220">Diaminopimelate biosynthesis</keyword>
<keyword id="KW-0456">Lyase</keyword>
<keyword id="KW-0457">Lysine biosynthesis</keyword>
<keyword id="KW-1185">Reference proteome</keyword>
<keyword id="KW-0704">Schiff base</keyword>
<name>DAPA_PARL1</name>
<comment type="function">
    <text evidence="1">Catalyzes the condensation of (S)-aspartate-beta-semialdehyde [(S)-ASA] and pyruvate to 4-hydroxy-tetrahydrodipicolinate (HTPA).</text>
</comment>
<comment type="catalytic activity">
    <reaction evidence="1">
        <text>L-aspartate 4-semialdehyde + pyruvate = (2S,4S)-4-hydroxy-2,3,4,5-tetrahydrodipicolinate + H2O + H(+)</text>
        <dbReference type="Rhea" id="RHEA:34171"/>
        <dbReference type="ChEBI" id="CHEBI:15361"/>
        <dbReference type="ChEBI" id="CHEBI:15377"/>
        <dbReference type="ChEBI" id="CHEBI:15378"/>
        <dbReference type="ChEBI" id="CHEBI:67139"/>
        <dbReference type="ChEBI" id="CHEBI:537519"/>
        <dbReference type="EC" id="4.3.3.7"/>
    </reaction>
</comment>
<comment type="pathway">
    <text evidence="1">Amino-acid biosynthesis; L-lysine biosynthesis via DAP pathway; (S)-tetrahydrodipicolinate from L-aspartate: step 3/4.</text>
</comment>
<comment type="subunit">
    <text evidence="1">Homotetramer; dimer of dimers.</text>
</comment>
<comment type="subcellular location">
    <subcellularLocation>
        <location evidence="1">Cytoplasm</location>
    </subcellularLocation>
</comment>
<comment type="similarity">
    <text evidence="1">Belongs to the DapA family.</text>
</comment>
<comment type="caution">
    <text evidence="2">Was originally thought to be a dihydrodipicolinate synthase (DHDPS), catalyzing the condensation of (S)-aspartate-beta-semialdehyde [(S)-ASA] and pyruvate to dihydrodipicolinate (DHDP). However, it was shown in E.coli that the product of the enzymatic reaction is not dihydrodipicolinate but in fact (4S)-4-hydroxy-2,3,4,5-tetrahydro-(2S)-dipicolinic acid (HTPA), and that the consecutive dehydration reaction leading to DHDP is not spontaneous but catalyzed by DapB.</text>
</comment>
<dbReference type="EC" id="4.3.3.7" evidence="1"/>
<dbReference type="EMBL" id="CP000774">
    <property type="protein sequence ID" value="ABS64469.1"/>
    <property type="molecule type" value="Genomic_DNA"/>
</dbReference>
<dbReference type="RefSeq" id="WP_012111783.1">
    <property type="nucleotide sequence ID" value="NC_009719.1"/>
</dbReference>
<dbReference type="SMR" id="A7HX36"/>
<dbReference type="STRING" id="402881.Plav_2862"/>
<dbReference type="KEGG" id="pla:Plav_2862"/>
<dbReference type="eggNOG" id="COG0329">
    <property type="taxonomic scope" value="Bacteria"/>
</dbReference>
<dbReference type="HOGENOM" id="CLU_049343_7_1_5"/>
<dbReference type="OrthoDB" id="9782828at2"/>
<dbReference type="UniPathway" id="UPA00034">
    <property type="reaction ID" value="UER00017"/>
</dbReference>
<dbReference type="Proteomes" id="UP000006377">
    <property type="component" value="Chromosome"/>
</dbReference>
<dbReference type="GO" id="GO:0005829">
    <property type="term" value="C:cytosol"/>
    <property type="evidence" value="ECO:0007669"/>
    <property type="project" value="TreeGrafter"/>
</dbReference>
<dbReference type="GO" id="GO:0008840">
    <property type="term" value="F:4-hydroxy-tetrahydrodipicolinate synthase activity"/>
    <property type="evidence" value="ECO:0007669"/>
    <property type="project" value="UniProtKB-UniRule"/>
</dbReference>
<dbReference type="GO" id="GO:0019877">
    <property type="term" value="P:diaminopimelate biosynthetic process"/>
    <property type="evidence" value="ECO:0007669"/>
    <property type="project" value="UniProtKB-UniRule"/>
</dbReference>
<dbReference type="GO" id="GO:0009089">
    <property type="term" value="P:lysine biosynthetic process via diaminopimelate"/>
    <property type="evidence" value="ECO:0007669"/>
    <property type="project" value="UniProtKB-UniRule"/>
</dbReference>
<dbReference type="CDD" id="cd00950">
    <property type="entry name" value="DHDPS"/>
    <property type="match status" value="1"/>
</dbReference>
<dbReference type="Gene3D" id="3.20.20.70">
    <property type="entry name" value="Aldolase class I"/>
    <property type="match status" value="1"/>
</dbReference>
<dbReference type="HAMAP" id="MF_00418">
    <property type="entry name" value="DapA"/>
    <property type="match status" value="1"/>
</dbReference>
<dbReference type="InterPro" id="IPR013785">
    <property type="entry name" value="Aldolase_TIM"/>
</dbReference>
<dbReference type="InterPro" id="IPR005263">
    <property type="entry name" value="DapA"/>
</dbReference>
<dbReference type="InterPro" id="IPR002220">
    <property type="entry name" value="DapA-like"/>
</dbReference>
<dbReference type="InterPro" id="IPR020625">
    <property type="entry name" value="Schiff_base-form_aldolases_AS"/>
</dbReference>
<dbReference type="InterPro" id="IPR020624">
    <property type="entry name" value="Schiff_base-form_aldolases_CS"/>
</dbReference>
<dbReference type="NCBIfam" id="TIGR00674">
    <property type="entry name" value="dapA"/>
    <property type="match status" value="1"/>
</dbReference>
<dbReference type="PANTHER" id="PTHR12128:SF66">
    <property type="entry name" value="4-HYDROXY-2-OXOGLUTARATE ALDOLASE, MITOCHONDRIAL"/>
    <property type="match status" value="1"/>
</dbReference>
<dbReference type="PANTHER" id="PTHR12128">
    <property type="entry name" value="DIHYDRODIPICOLINATE SYNTHASE"/>
    <property type="match status" value="1"/>
</dbReference>
<dbReference type="Pfam" id="PF00701">
    <property type="entry name" value="DHDPS"/>
    <property type="match status" value="1"/>
</dbReference>
<dbReference type="PIRSF" id="PIRSF001365">
    <property type="entry name" value="DHDPS"/>
    <property type="match status" value="1"/>
</dbReference>
<dbReference type="PRINTS" id="PR00146">
    <property type="entry name" value="DHPICSNTHASE"/>
</dbReference>
<dbReference type="SMART" id="SM01130">
    <property type="entry name" value="DHDPS"/>
    <property type="match status" value="1"/>
</dbReference>
<dbReference type="SUPFAM" id="SSF51569">
    <property type="entry name" value="Aldolase"/>
    <property type="match status" value="1"/>
</dbReference>
<dbReference type="PROSITE" id="PS00665">
    <property type="entry name" value="DHDPS_1"/>
    <property type="match status" value="1"/>
</dbReference>
<dbReference type="PROSITE" id="PS00666">
    <property type="entry name" value="DHDPS_2"/>
    <property type="match status" value="1"/>
</dbReference>
<organism>
    <name type="scientific">Parvibaculum lavamentivorans (strain DS-1 / DSM 13023 / NCIMB 13966)</name>
    <dbReference type="NCBI Taxonomy" id="402881"/>
    <lineage>
        <taxon>Bacteria</taxon>
        <taxon>Pseudomonadati</taxon>
        <taxon>Pseudomonadota</taxon>
        <taxon>Alphaproteobacteria</taxon>
        <taxon>Hyphomicrobiales</taxon>
        <taxon>Parvibaculaceae</taxon>
        <taxon>Parvibaculum</taxon>
    </lineage>
</organism>